<protein>
    <recommendedName>
        <fullName evidence="1">Large ribosomal subunit protein bL36</fullName>
    </recommendedName>
    <alternativeName>
        <fullName evidence="2">50S ribosomal protein L36</fullName>
    </alternativeName>
</protein>
<organism>
    <name type="scientific">Idiomarina loihiensis (strain ATCC BAA-735 / DSM 15497 / L2-TR)</name>
    <dbReference type="NCBI Taxonomy" id="283942"/>
    <lineage>
        <taxon>Bacteria</taxon>
        <taxon>Pseudomonadati</taxon>
        <taxon>Pseudomonadota</taxon>
        <taxon>Gammaproteobacteria</taxon>
        <taxon>Alteromonadales</taxon>
        <taxon>Idiomarinaceae</taxon>
        <taxon>Idiomarina</taxon>
    </lineage>
</organism>
<dbReference type="EMBL" id="AE017340">
    <property type="protein sequence ID" value="AAV82727.1"/>
    <property type="molecule type" value="Genomic_DNA"/>
</dbReference>
<dbReference type="RefSeq" id="WP_006956433.1">
    <property type="nucleotide sequence ID" value="NC_006512.1"/>
</dbReference>
<dbReference type="SMR" id="Q5QXV4"/>
<dbReference type="STRING" id="283942.IL1895"/>
<dbReference type="GeneID" id="78252615"/>
<dbReference type="KEGG" id="ilo:IL1895"/>
<dbReference type="eggNOG" id="COG0257">
    <property type="taxonomic scope" value="Bacteria"/>
</dbReference>
<dbReference type="HOGENOM" id="CLU_135723_6_2_6"/>
<dbReference type="Proteomes" id="UP000001171">
    <property type="component" value="Chromosome"/>
</dbReference>
<dbReference type="GO" id="GO:0005737">
    <property type="term" value="C:cytoplasm"/>
    <property type="evidence" value="ECO:0007669"/>
    <property type="project" value="UniProtKB-ARBA"/>
</dbReference>
<dbReference type="GO" id="GO:1990904">
    <property type="term" value="C:ribonucleoprotein complex"/>
    <property type="evidence" value="ECO:0007669"/>
    <property type="project" value="UniProtKB-KW"/>
</dbReference>
<dbReference type="GO" id="GO:0005840">
    <property type="term" value="C:ribosome"/>
    <property type="evidence" value="ECO:0007669"/>
    <property type="project" value="UniProtKB-KW"/>
</dbReference>
<dbReference type="GO" id="GO:0003735">
    <property type="term" value="F:structural constituent of ribosome"/>
    <property type="evidence" value="ECO:0007669"/>
    <property type="project" value="InterPro"/>
</dbReference>
<dbReference type="GO" id="GO:0006412">
    <property type="term" value="P:translation"/>
    <property type="evidence" value="ECO:0007669"/>
    <property type="project" value="UniProtKB-UniRule"/>
</dbReference>
<dbReference type="HAMAP" id="MF_00251">
    <property type="entry name" value="Ribosomal_bL36"/>
    <property type="match status" value="1"/>
</dbReference>
<dbReference type="InterPro" id="IPR000473">
    <property type="entry name" value="Ribosomal_bL36"/>
</dbReference>
<dbReference type="InterPro" id="IPR035977">
    <property type="entry name" value="Ribosomal_bL36_sp"/>
</dbReference>
<dbReference type="NCBIfam" id="TIGR01022">
    <property type="entry name" value="rpmJ_bact"/>
    <property type="match status" value="1"/>
</dbReference>
<dbReference type="PANTHER" id="PTHR42888">
    <property type="entry name" value="50S RIBOSOMAL PROTEIN L36, CHLOROPLASTIC"/>
    <property type="match status" value="1"/>
</dbReference>
<dbReference type="PANTHER" id="PTHR42888:SF1">
    <property type="entry name" value="LARGE RIBOSOMAL SUBUNIT PROTEIN BL36C"/>
    <property type="match status" value="1"/>
</dbReference>
<dbReference type="Pfam" id="PF00444">
    <property type="entry name" value="Ribosomal_L36"/>
    <property type="match status" value="1"/>
</dbReference>
<dbReference type="SUPFAM" id="SSF57840">
    <property type="entry name" value="Ribosomal protein L36"/>
    <property type="match status" value="1"/>
</dbReference>
<dbReference type="PROSITE" id="PS00828">
    <property type="entry name" value="RIBOSOMAL_L36"/>
    <property type="match status" value="1"/>
</dbReference>
<sequence>MKVRASVKKICRNCKIIKRNGVVRVICTDAKHKQRQG</sequence>
<evidence type="ECO:0000255" key="1">
    <source>
        <dbReference type="HAMAP-Rule" id="MF_00251"/>
    </source>
</evidence>
<evidence type="ECO:0000305" key="2"/>
<proteinExistence type="inferred from homology"/>
<keyword id="KW-1185">Reference proteome</keyword>
<keyword id="KW-0687">Ribonucleoprotein</keyword>
<keyword id="KW-0689">Ribosomal protein</keyword>
<comment type="similarity">
    <text evidence="1">Belongs to the bacterial ribosomal protein bL36 family.</text>
</comment>
<name>RL36_IDILO</name>
<reference key="1">
    <citation type="journal article" date="2004" name="Proc. Natl. Acad. Sci. U.S.A.">
        <title>Genome sequence of the deep-sea gamma-proteobacterium Idiomarina loihiensis reveals amino acid fermentation as a source of carbon and energy.</title>
        <authorList>
            <person name="Hou S."/>
            <person name="Saw J.H."/>
            <person name="Lee K.S."/>
            <person name="Freitas T.A."/>
            <person name="Belisle C."/>
            <person name="Kawarabayasi Y."/>
            <person name="Donachie S.P."/>
            <person name="Pikina A."/>
            <person name="Galperin M.Y."/>
            <person name="Koonin E.V."/>
            <person name="Makarova K.S."/>
            <person name="Omelchenko M.V."/>
            <person name="Sorokin A."/>
            <person name="Wolf Y.I."/>
            <person name="Li Q.X."/>
            <person name="Keum Y.S."/>
            <person name="Campbell S."/>
            <person name="Denery J."/>
            <person name="Aizawa S."/>
            <person name="Shibata S."/>
            <person name="Malahoff A."/>
            <person name="Alam M."/>
        </authorList>
    </citation>
    <scope>NUCLEOTIDE SEQUENCE [LARGE SCALE GENOMIC DNA]</scope>
    <source>
        <strain>ATCC BAA-735 / DSM 15497 / L2-TR</strain>
    </source>
</reference>
<accession>Q5QXV4</accession>
<gene>
    <name evidence="1" type="primary">rpmJ</name>
    <name type="ordered locus">IL1895</name>
</gene>
<feature type="chain" id="PRO_0000302218" description="Large ribosomal subunit protein bL36">
    <location>
        <begin position="1"/>
        <end position="37"/>
    </location>
</feature>